<protein>
    <recommendedName>
        <fullName>Opsin Rh4</fullName>
    </recommendedName>
    <alternativeName>
        <fullName>Inner R7 photoreceptor cells opsin</fullName>
    </alternativeName>
</protein>
<evidence type="ECO:0000255" key="1"/>
<evidence type="ECO:0000255" key="2">
    <source>
        <dbReference type="PROSITE-ProRule" id="PRU00521"/>
    </source>
</evidence>
<evidence type="ECO:0000305" key="3"/>
<reference key="1">
    <citation type="journal article" date="1987" name="J. Neurosci.">
        <title>A second opsin gene expressed in the ultraviolet-sensitive R7 photoreceptor cells of Drosophila melanogaster.</title>
        <authorList>
            <person name="Montell C."/>
            <person name="Jones K."/>
            <person name="Zuker C.S."/>
            <person name="Rubin G.M."/>
        </authorList>
    </citation>
    <scope>NUCLEOTIDE SEQUENCE [GENOMIC DNA]</scope>
</reference>
<reference key="2">
    <citation type="journal article" date="2000" name="Science">
        <title>The genome sequence of Drosophila melanogaster.</title>
        <authorList>
            <person name="Adams M.D."/>
            <person name="Celniker S.E."/>
            <person name="Holt R.A."/>
            <person name="Evans C.A."/>
            <person name="Gocayne J.D."/>
            <person name="Amanatides P.G."/>
            <person name="Scherer S.E."/>
            <person name="Li P.W."/>
            <person name="Hoskins R.A."/>
            <person name="Galle R.F."/>
            <person name="George R.A."/>
            <person name="Lewis S.E."/>
            <person name="Richards S."/>
            <person name="Ashburner M."/>
            <person name="Henderson S.N."/>
            <person name="Sutton G.G."/>
            <person name="Wortman J.R."/>
            <person name="Yandell M.D."/>
            <person name="Zhang Q."/>
            <person name="Chen L.X."/>
            <person name="Brandon R.C."/>
            <person name="Rogers Y.-H.C."/>
            <person name="Blazej R.G."/>
            <person name="Champe M."/>
            <person name="Pfeiffer B.D."/>
            <person name="Wan K.H."/>
            <person name="Doyle C."/>
            <person name="Baxter E.G."/>
            <person name="Helt G."/>
            <person name="Nelson C.R."/>
            <person name="Miklos G.L.G."/>
            <person name="Abril J.F."/>
            <person name="Agbayani A."/>
            <person name="An H.-J."/>
            <person name="Andrews-Pfannkoch C."/>
            <person name="Baldwin D."/>
            <person name="Ballew R.M."/>
            <person name="Basu A."/>
            <person name="Baxendale J."/>
            <person name="Bayraktaroglu L."/>
            <person name="Beasley E.M."/>
            <person name="Beeson K.Y."/>
            <person name="Benos P.V."/>
            <person name="Berman B.P."/>
            <person name="Bhandari D."/>
            <person name="Bolshakov S."/>
            <person name="Borkova D."/>
            <person name="Botchan M.R."/>
            <person name="Bouck J."/>
            <person name="Brokstein P."/>
            <person name="Brottier P."/>
            <person name="Burtis K.C."/>
            <person name="Busam D.A."/>
            <person name="Butler H."/>
            <person name="Cadieu E."/>
            <person name="Center A."/>
            <person name="Chandra I."/>
            <person name="Cherry J.M."/>
            <person name="Cawley S."/>
            <person name="Dahlke C."/>
            <person name="Davenport L.B."/>
            <person name="Davies P."/>
            <person name="de Pablos B."/>
            <person name="Delcher A."/>
            <person name="Deng Z."/>
            <person name="Mays A.D."/>
            <person name="Dew I."/>
            <person name="Dietz S.M."/>
            <person name="Dodson K."/>
            <person name="Doup L.E."/>
            <person name="Downes M."/>
            <person name="Dugan-Rocha S."/>
            <person name="Dunkov B.C."/>
            <person name="Dunn P."/>
            <person name="Durbin K.J."/>
            <person name="Evangelista C.C."/>
            <person name="Ferraz C."/>
            <person name="Ferriera S."/>
            <person name="Fleischmann W."/>
            <person name="Fosler C."/>
            <person name="Gabrielian A.E."/>
            <person name="Garg N.S."/>
            <person name="Gelbart W.M."/>
            <person name="Glasser K."/>
            <person name="Glodek A."/>
            <person name="Gong F."/>
            <person name="Gorrell J.H."/>
            <person name="Gu Z."/>
            <person name="Guan P."/>
            <person name="Harris M."/>
            <person name="Harris N.L."/>
            <person name="Harvey D.A."/>
            <person name="Heiman T.J."/>
            <person name="Hernandez J.R."/>
            <person name="Houck J."/>
            <person name="Hostin D."/>
            <person name="Houston K.A."/>
            <person name="Howland T.J."/>
            <person name="Wei M.-H."/>
            <person name="Ibegwam C."/>
            <person name="Jalali M."/>
            <person name="Kalush F."/>
            <person name="Karpen G.H."/>
            <person name="Ke Z."/>
            <person name="Kennison J.A."/>
            <person name="Ketchum K.A."/>
            <person name="Kimmel B.E."/>
            <person name="Kodira C.D."/>
            <person name="Kraft C.L."/>
            <person name="Kravitz S."/>
            <person name="Kulp D."/>
            <person name="Lai Z."/>
            <person name="Lasko P."/>
            <person name="Lei Y."/>
            <person name="Levitsky A.A."/>
            <person name="Li J.H."/>
            <person name="Li Z."/>
            <person name="Liang Y."/>
            <person name="Lin X."/>
            <person name="Liu X."/>
            <person name="Mattei B."/>
            <person name="McIntosh T.C."/>
            <person name="McLeod M.P."/>
            <person name="McPherson D."/>
            <person name="Merkulov G."/>
            <person name="Milshina N.V."/>
            <person name="Mobarry C."/>
            <person name="Morris J."/>
            <person name="Moshrefi A."/>
            <person name="Mount S.M."/>
            <person name="Moy M."/>
            <person name="Murphy B."/>
            <person name="Murphy L."/>
            <person name="Muzny D.M."/>
            <person name="Nelson D.L."/>
            <person name="Nelson D.R."/>
            <person name="Nelson K.A."/>
            <person name="Nixon K."/>
            <person name="Nusskern D.R."/>
            <person name="Pacleb J.M."/>
            <person name="Palazzolo M."/>
            <person name="Pittman G.S."/>
            <person name="Pan S."/>
            <person name="Pollard J."/>
            <person name="Puri V."/>
            <person name="Reese M.G."/>
            <person name="Reinert K."/>
            <person name="Remington K."/>
            <person name="Saunders R.D.C."/>
            <person name="Scheeler F."/>
            <person name="Shen H."/>
            <person name="Shue B.C."/>
            <person name="Siden-Kiamos I."/>
            <person name="Simpson M."/>
            <person name="Skupski M.P."/>
            <person name="Smith T.J."/>
            <person name="Spier E."/>
            <person name="Spradling A.C."/>
            <person name="Stapleton M."/>
            <person name="Strong R."/>
            <person name="Sun E."/>
            <person name="Svirskas R."/>
            <person name="Tector C."/>
            <person name="Turner R."/>
            <person name="Venter E."/>
            <person name="Wang A.H."/>
            <person name="Wang X."/>
            <person name="Wang Z.-Y."/>
            <person name="Wassarman D.A."/>
            <person name="Weinstock G.M."/>
            <person name="Weissenbach J."/>
            <person name="Williams S.M."/>
            <person name="Woodage T."/>
            <person name="Worley K.C."/>
            <person name="Wu D."/>
            <person name="Yang S."/>
            <person name="Yao Q.A."/>
            <person name="Ye J."/>
            <person name="Yeh R.-F."/>
            <person name="Zaveri J.S."/>
            <person name="Zhan M."/>
            <person name="Zhang G."/>
            <person name="Zhao Q."/>
            <person name="Zheng L."/>
            <person name="Zheng X.H."/>
            <person name="Zhong F.N."/>
            <person name="Zhong W."/>
            <person name="Zhou X."/>
            <person name="Zhu S.C."/>
            <person name="Zhu X."/>
            <person name="Smith H.O."/>
            <person name="Gibbs R.A."/>
            <person name="Myers E.W."/>
            <person name="Rubin G.M."/>
            <person name="Venter J.C."/>
        </authorList>
    </citation>
    <scope>NUCLEOTIDE SEQUENCE [LARGE SCALE GENOMIC DNA]</scope>
    <source>
        <strain>Berkeley</strain>
    </source>
</reference>
<reference key="3">
    <citation type="journal article" date="2002" name="Genome Biol.">
        <title>Annotation of the Drosophila melanogaster euchromatic genome: a systematic review.</title>
        <authorList>
            <person name="Misra S."/>
            <person name="Crosby M.A."/>
            <person name="Mungall C.J."/>
            <person name="Matthews B.B."/>
            <person name="Campbell K.S."/>
            <person name="Hradecky P."/>
            <person name="Huang Y."/>
            <person name="Kaminker J.S."/>
            <person name="Millburn G.H."/>
            <person name="Prochnik S.E."/>
            <person name="Smith C.D."/>
            <person name="Tupy J.L."/>
            <person name="Whitfield E.J."/>
            <person name="Bayraktaroglu L."/>
            <person name="Berman B.P."/>
            <person name="Bettencourt B.R."/>
            <person name="Celniker S.E."/>
            <person name="de Grey A.D.N.J."/>
            <person name="Drysdale R.A."/>
            <person name="Harris N.L."/>
            <person name="Richter J."/>
            <person name="Russo S."/>
            <person name="Schroeder A.J."/>
            <person name="Shu S.Q."/>
            <person name="Stapleton M."/>
            <person name="Yamada C."/>
            <person name="Ashburner M."/>
            <person name="Gelbart W.M."/>
            <person name="Rubin G.M."/>
            <person name="Lewis S.E."/>
        </authorList>
    </citation>
    <scope>GENOME REANNOTATION</scope>
    <source>
        <strain>Berkeley</strain>
    </source>
</reference>
<organism>
    <name type="scientific">Drosophila melanogaster</name>
    <name type="common">Fruit fly</name>
    <dbReference type="NCBI Taxonomy" id="7227"/>
    <lineage>
        <taxon>Eukaryota</taxon>
        <taxon>Metazoa</taxon>
        <taxon>Ecdysozoa</taxon>
        <taxon>Arthropoda</taxon>
        <taxon>Hexapoda</taxon>
        <taxon>Insecta</taxon>
        <taxon>Pterygota</taxon>
        <taxon>Neoptera</taxon>
        <taxon>Endopterygota</taxon>
        <taxon>Diptera</taxon>
        <taxon>Brachycera</taxon>
        <taxon>Muscomorpha</taxon>
        <taxon>Ephydroidea</taxon>
        <taxon>Drosophilidae</taxon>
        <taxon>Drosophila</taxon>
        <taxon>Sophophora</taxon>
    </lineage>
</organism>
<proteinExistence type="evidence at protein level"/>
<feature type="chain" id="PRO_0000197630" description="Opsin Rh4">
    <location>
        <begin position="1"/>
        <end position="378"/>
    </location>
</feature>
<feature type="topological domain" description="Extracellular">
    <location>
        <begin position="1"/>
        <end position="53"/>
    </location>
</feature>
<feature type="transmembrane region" description="Helical; Name=1" evidence="1">
    <location>
        <begin position="54"/>
        <end position="78"/>
    </location>
</feature>
<feature type="topological domain" description="Cytoplasmic">
    <location>
        <begin position="79"/>
        <end position="90"/>
    </location>
</feature>
<feature type="transmembrane region" description="Helical; Name=2" evidence="1">
    <location>
        <begin position="91"/>
        <end position="111"/>
    </location>
</feature>
<feature type="topological domain" description="Extracellular">
    <location>
        <begin position="112"/>
        <end position="127"/>
    </location>
</feature>
<feature type="transmembrane region" description="Helical; Name=3" evidence="1">
    <location>
        <begin position="128"/>
        <end position="148"/>
    </location>
</feature>
<feature type="topological domain" description="Cytoplasmic">
    <location>
        <begin position="149"/>
        <end position="167"/>
    </location>
</feature>
<feature type="transmembrane region" description="Helical; Name=4" evidence="1">
    <location>
        <begin position="168"/>
        <end position="192"/>
    </location>
</feature>
<feature type="topological domain" description="Extracellular">
    <location>
        <begin position="193"/>
        <end position="216"/>
    </location>
</feature>
<feature type="transmembrane region" description="Helical; Name=5" evidence="1">
    <location>
        <begin position="217"/>
        <end position="244"/>
    </location>
</feature>
<feature type="topological domain" description="Cytoplasmic">
    <location>
        <begin position="245"/>
        <end position="280"/>
    </location>
</feature>
<feature type="transmembrane region" description="Helical; Name=6" evidence="1">
    <location>
        <begin position="281"/>
        <end position="304"/>
    </location>
</feature>
<feature type="topological domain" description="Extracellular">
    <location>
        <begin position="305"/>
        <end position="312"/>
    </location>
</feature>
<feature type="transmembrane region" description="Helical; Name=7" evidence="1">
    <location>
        <begin position="313"/>
        <end position="337"/>
    </location>
</feature>
<feature type="topological domain" description="Cytoplasmic">
    <location>
        <begin position="338"/>
        <end position="378"/>
    </location>
</feature>
<feature type="modified residue" description="N6-(retinylidene)lysine">
    <location>
        <position position="324"/>
    </location>
</feature>
<feature type="glycosylation site" description="N-linked (GlcNAc...) asparagine" evidence="3">
    <location>
        <position position="6"/>
    </location>
</feature>
<feature type="disulfide bond" evidence="2">
    <location>
        <begin position="126"/>
        <end position="203"/>
    </location>
</feature>
<feature type="sequence conflict" description="In Ref. 1; AAA28856." evidence="3" ref="1">
    <location>
        <begin position="111"/>
        <end position="112"/>
    </location>
</feature>
<feature type="sequence conflict" description="In Ref. 1; AAA28856." evidence="3" ref="1">
    <original>A</original>
    <variation>AIY</variation>
    <location>
        <position position="120"/>
    </location>
</feature>
<feature type="sequence conflict" description="In Ref. 1; AAA28856." evidence="3" ref="1">
    <original>P</original>
    <variation>Q</variation>
    <location>
        <position position="313"/>
    </location>
</feature>
<dbReference type="EMBL" id="M17730">
    <property type="protein sequence ID" value="AAA28856.1"/>
    <property type="molecule type" value="Genomic_DNA"/>
</dbReference>
<dbReference type="EMBL" id="M17719">
    <property type="protein sequence ID" value="AAA28856.1"/>
    <property type="status" value="JOINED"/>
    <property type="molecule type" value="Genomic_DNA"/>
</dbReference>
<dbReference type="EMBL" id="AE014296">
    <property type="protein sequence ID" value="AAF49400.1"/>
    <property type="molecule type" value="Genomic_DNA"/>
</dbReference>
<dbReference type="PIR" id="S28789">
    <property type="entry name" value="S28789"/>
</dbReference>
<dbReference type="RefSeq" id="NP_476701.1">
    <property type="nucleotide sequence ID" value="NM_057353.4"/>
</dbReference>
<dbReference type="SMR" id="P08255"/>
<dbReference type="BioGRID" id="65186">
    <property type="interactions" value="1"/>
</dbReference>
<dbReference type="FunCoup" id="P08255">
    <property type="interactions" value="103"/>
</dbReference>
<dbReference type="STRING" id="7227.FBpp0075097"/>
<dbReference type="GlyCosmos" id="P08255">
    <property type="glycosylation" value="1 site, No reported glycans"/>
</dbReference>
<dbReference type="GlyGen" id="P08255">
    <property type="glycosylation" value="1 site"/>
</dbReference>
<dbReference type="PaxDb" id="7227-FBpp0075097"/>
<dbReference type="DNASU" id="39887"/>
<dbReference type="EnsemblMetazoa" id="FBtr0075338">
    <property type="protein sequence ID" value="FBpp0075097"/>
    <property type="gene ID" value="FBgn0003250"/>
</dbReference>
<dbReference type="GeneID" id="39887"/>
<dbReference type="KEGG" id="dme:Dmel_CG9668"/>
<dbReference type="AGR" id="FB:FBgn0003250"/>
<dbReference type="CTD" id="39887"/>
<dbReference type="FlyBase" id="FBgn0003250">
    <property type="gene designation" value="Rh4"/>
</dbReference>
<dbReference type="VEuPathDB" id="VectorBase:FBgn0003250"/>
<dbReference type="eggNOG" id="KOG3656">
    <property type="taxonomic scope" value="Eukaryota"/>
</dbReference>
<dbReference type="HOGENOM" id="CLU_009579_3_0_1"/>
<dbReference type="InParanoid" id="P08255"/>
<dbReference type="OMA" id="GCQIFAA"/>
<dbReference type="OrthoDB" id="2105199at2759"/>
<dbReference type="PhylomeDB" id="P08255"/>
<dbReference type="Reactome" id="R-DME-416476">
    <property type="pathway name" value="G alpha (q) signalling events"/>
</dbReference>
<dbReference type="Reactome" id="R-DME-419771">
    <property type="pathway name" value="Opsins"/>
</dbReference>
<dbReference type="BioGRID-ORCS" id="39887">
    <property type="hits" value="0 hits in 1 CRISPR screen"/>
</dbReference>
<dbReference type="ChiTaRS" id="Rh4">
    <property type="organism name" value="fly"/>
</dbReference>
<dbReference type="GenomeRNAi" id="39887"/>
<dbReference type="PRO" id="PR:P08255"/>
<dbReference type="Proteomes" id="UP000000803">
    <property type="component" value="Chromosome 3L"/>
</dbReference>
<dbReference type="Bgee" id="FBgn0003250">
    <property type="expression patterns" value="Expressed in photoreceptor cell R7 (Drosophila) in insect head and 60 other cell types or tissues"/>
</dbReference>
<dbReference type="ExpressionAtlas" id="P08255">
    <property type="expression patterns" value="baseline and differential"/>
</dbReference>
<dbReference type="GO" id="GO:0016020">
    <property type="term" value="C:membrane"/>
    <property type="evidence" value="ECO:0000250"/>
    <property type="project" value="FlyBase"/>
</dbReference>
<dbReference type="GO" id="GO:0005886">
    <property type="term" value="C:plasma membrane"/>
    <property type="evidence" value="ECO:0000318"/>
    <property type="project" value="GO_Central"/>
</dbReference>
<dbReference type="GO" id="GO:0008020">
    <property type="term" value="F:G protein-coupled photoreceptor activity"/>
    <property type="evidence" value="ECO:0000314"/>
    <property type="project" value="FlyBase"/>
</dbReference>
<dbReference type="GO" id="GO:0071482">
    <property type="term" value="P:cellular response to light stimulus"/>
    <property type="evidence" value="ECO:0000318"/>
    <property type="project" value="GO_Central"/>
</dbReference>
<dbReference type="GO" id="GO:0009589">
    <property type="term" value="P:detection of UV"/>
    <property type="evidence" value="ECO:0000304"/>
    <property type="project" value="FlyBase"/>
</dbReference>
<dbReference type="GO" id="GO:0007186">
    <property type="term" value="P:G protein-coupled receptor signaling pathway"/>
    <property type="evidence" value="ECO:0000250"/>
    <property type="project" value="FlyBase"/>
</dbReference>
<dbReference type="GO" id="GO:0007602">
    <property type="term" value="P:phototransduction"/>
    <property type="evidence" value="ECO:0000318"/>
    <property type="project" value="GO_Central"/>
</dbReference>
<dbReference type="GO" id="GO:0007604">
    <property type="term" value="P:phototransduction, UV"/>
    <property type="evidence" value="ECO:0000314"/>
    <property type="project" value="FlyBase"/>
</dbReference>
<dbReference type="GO" id="GO:0007601">
    <property type="term" value="P:visual perception"/>
    <property type="evidence" value="ECO:0007669"/>
    <property type="project" value="UniProtKB-KW"/>
</dbReference>
<dbReference type="CDD" id="cd15079">
    <property type="entry name" value="7tmA_photoreceptors_insect"/>
    <property type="match status" value="1"/>
</dbReference>
<dbReference type="FunFam" id="1.20.1070.10:FF:000044">
    <property type="entry name" value="Opsin, ultraviolet-sensitive"/>
    <property type="match status" value="1"/>
</dbReference>
<dbReference type="Gene3D" id="1.20.1070.10">
    <property type="entry name" value="Rhodopsin 7-helix transmembrane proteins"/>
    <property type="match status" value="1"/>
</dbReference>
<dbReference type="InterPro" id="IPR050125">
    <property type="entry name" value="GPCR_opsins"/>
</dbReference>
<dbReference type="InterPro" id="IPR000276">
    <property type="entry name" value="GPCR_Rhodpsn"/>
</dbReference>
<dbReference type="InterPro" id="IPR017452">
    <property type="entry name" value="GPCR_Rhodpsn_7TM"/>
</dbReference>
<dbReference type="InterPro" id="IPR001760">
    <property type="entry name" value="Opsin"/>
</dbReference>
<dbReference type="InterPro" id="IPR027430">
    <property type="entry name" value="Retinal_BS"/>
</dbReference>
<dbReference type="PANTHER" id="PTHR24240">
    <property type="entry name" value="OPSIN"/>
    <property type="match status" value="1"/>
</dbReference>
<dbReference type="Pfam" id="PF00001">
    <property type="entry name" value="7tm_1"/>
    <property type="match status" value="1"/>
</dbReference>
<dbReference type="PRINTS" id="PR00237">
    <property type="entry name" value="GPCRRHODOPSN"/>
</dbReference>
<dbReference type="PRINTS" id="PR00577">
    <property type="entry name" value="OPSINRH3RH4"/>
</dbReference>
<dbReference type="SUPFAM" id="SSF81321">
    <property type="entry name" value="Family A G protein-coupled receptor-like"/>
    <property type="match status" value="1"/>
</dbReference>
<dbReference type="PROSITE" id="PS00237">
    <property type="entry name" value="G_PROTEIN_RECEP_F1_1"/>
    <property type="match status" value="1"/>
</dbReference>
<dbReference type="PROSITE" id="PS50262">
    <property type="entry name" value="G_PROTEIN_RECEP_F1_2"/>
    <property type="match status" value="1"/>
</dbReference>
<dbReference type="PROSITE" id="PS00238">
    <property type="entry name" value="OPSIN"/>
    <property type="match status" value="1"/>
</dbReference>
<comment type="function">
    <text>Visual pigments are the light-absorbing molecules that mediate vision. They consist of an apoprotein, opsin, covalently linked to cis-retinal.</text>
</comment>
<comment type="subcellular location">
    <subcellularLocation>
        <location>Membrane</location>
        <topology>Multi-pass membrane protein</topology>
    </subcellularLocation>
</comment>
<comment type="PTM">
    <text>Phosphorylated on some or all of the serine and threonine residues present in the C-terminal region.</text>
</comment>
<comment type="miscellaneous">
    <text>Each Drosophila eye is composed of 800 facets or ommatidia. Each ommatidium contains 8 photoreceptor cells (R1-R8), the R1 to R6 cells are outer cells, while R7 and R8 are inner cells.</text>
</comment>
<comment type="miscellaneous">
    <text>Opsin Rh4 is sensitive to UV light.</text>
</comment>
<comment type="similarity">
    <text evidence="2">Belongs to the G-protein coupled receptor 1 family. Opsin subfamily.</text>
</comment>
<accession>P08255</accession>
<accession>Q9VVB3</accession>
<name>OPS4_DROME</name>
<keyword id="KW-0157">Chromophore</keyword>
<keyword id="KW-1015">Disulfide bond</keyword>
<keyword id="KW-0297">G-protein coupled receptor</keyword>
<keyword id="KW-0325">Glycoprotein</keyword>
<keyword id="KW-0472">Membrane</keyword>
<keyword id="KW-0597">Phosphoprotein</keyword>
<keyword id="KW-0600">Photoreceptor protein</keyword>
<keyword id="KW-0675">Receptor</keyword>
<keyword id="KW-1185">Reference proteome</keyword>
<keyword id="KW-0681">Retinal protein</keyword>
<keyword id="KW-0716">Sensory transduction</keyword>
<keyword id="KW-0807">Transducer</keyword>
<keyword id="KW-0812">Transmembrane</keyword>
<keyword id="KW-1133">Transmembrane helix</keyword>
<keyword id="KW-0844">Vision</keyword>
<sequence>MEPLCNASEPPLRPEARSSGNGDLQFLGWNVPPDQIQYIPEHWLTQLEPPASMHYMLGVFYIFLFCASTVGNGMVIWIFSTSKSLRTPSNMFVLNLAVFDLIMCLKAPIFIYNSFHRGFALGNTWCQIFASIGSYSGIGAGMTNAAIGYDRYNVITKPMNRNMTFTKAVIMNIIIWLYCTPWVVLPLTQFWDRFVPEGYLTSCSFDYLSDNFDTRLFVGTIFFFSFVCPTLMILYYYSQIVGHVFSHEKALREQAKKMNVESLRSNVDKSKETAEIRIAKAAITICFLFFVSWTPYGVMSLIGAFGDKSLLTPGATMIPACTCKLVACIDPFVYAISHPRYRLELQKRCPWLGVNEKSGEISSAQSTTTQEQQQTTAA</sequence>
<gene>
    <name type="primary">Rh4</name>
    <name type="ORF">CG9668</name>
</gene>